<comment type="function">
    <text evidence="1">Catalyzes the conversion of heme O to heme A by two successive hydroxylations of the methyl group at C8. The first hydroxylation forms heme I, the second hydroxylation results in an unstable dihydroxymethyl group, which spontaneously dehydrates, resulting in the formyl group of heme A.</text>
</comment>
<comment type="catalytic activity">
    <reaction evidence="1">
        <text>Fe(II)-heme o + 2 A + H2O = Fe(II)-heme a + 2 AH2</text>
        <dbReference type="Rhea" id="RHEA:63388"/>
        <dbReference type="ChEBI" id="CHEBI:13193"/>
        <dbReference type="ChEBI" id="CHEBI:15377"/>
        <dbReference type="ChEBI" id="CHEBI:17499"/>
        <dbReference type="ChEBI" id="CHEBI:60530"/>
        <dbReference type="ChEBI" id="CHEBI:61715"/>
        <dbReference type="EC" id="1.17.99.9"/>
    </reaction>
    <physiologicalReaction direction="left-to-right" evidence="1">
        <dbReference type="Rhea" id="RHEA:63389"/>
    </physiologicalReaction>
</comment>
<comment type="cofactor">
    <cofactor evidence="1">
        <name>heme b</name>
        <dbReference type="ChEBI" id="CHEBI:60344"/>
    </cofactor>
</comment>
<comment type="pathway">
    <text evidence="1">Porphyrin-containing compound metabolism; heme A biosynthesis; heme A from heme O: step 1/1.</text>
</comment>
<comment type="subunit">
    <text evidence="1">Interacts with CtaB.</text>
</comment>
<comment type="subcellular location">
    <subcellularLocation>
        <location evidence="1">Cell membrane</location>
        <topology evidence="1">Multi-pass membrane protein</topology>
    </subcellularLocation>
</comment>
<comment type="similarity">
    <text evidence="1">Belongs to the COX15/CtaA family. Type 2 subfamily.</text>
</comment>
<evidence type="ECO:0000255" key="1">
    <source>
        <dbReference type="HAMAP-Rule" id="MF_01665"/>
    </source>
</evidence>
<dbReference type="EC" id="1.17.99.9" evidence="1"/>
<dbReference type="EMBL" id="CP000613">
    <property type="protein sequence ID" value="ACJ00079.1"/>
    <property type="molecule type" value="Genomic_DNA"/>
</dbReference>
<dbReference type="RefSeq" id="WP_012567860.1">
    <property type="nucleotide sequence ID" value="NC_011420.2"/>
</dbReference>
<dbReference type="SMR" id="B6IUZ7"/>
<dbReference type="STRING" id="414684.RC1_2704"/>
<dbReference type="KEGG" id="rce:RC1_2704"/>
<dbReference type="eggNOG" id="COG1612">
    <property type="taxonomic scope" value="Bacteria"/>
</dbReference>
<dbReference type="HOGENOM" id="CLU_017627_0_0_5"/>
<dbReference type="OrthoDB" id="9793156at2"/>
<dbReference type="UniPathway" id="UPA00269">
    <property type="reaction ID" value="UER00713"/>
</dbReference>
<dbReference type="Proteomes" id="UP000001591">
    <property type="component" value="Chromosome"/>
</dbReference>
<dbReference type="GO" id="GO:0005886">
    <property type="term" value="C:plasma membrane"/>
    <property type="evidence" value="ECO:0007669"/>
    <property type="project" value="UniProtKB-SubCell"/>
</dbReference>
<dbReference type="GO" id="GO:0046872">
    <property type="term" value="F:metal ion binding"/>
    <property type="evidence" value="ECO:0007669"/>
    <property type="project" value="UniProtKB-KW"/>
</dbReference>
<dbReference type="GO" id="GO:0016653">
    <property type="term" value="F:oxidoreductase activity, acting on NAD(P)H, heme protein as acceptor"/>
    <property type="evidence" value="ECO:0007669"/>
    <property type="project" value="InterPro"/>
</dbReference>
<dbReference type="GO" id="GO:0006784">
    <property type="term" value="P:heme A biosynthetic process"/>
    <property type="evidence" value="ECO:0007669"/>
    <property type="project" value="UniProtKB-UniRule"/>
</dbReference>
<dbReference type="HAMAP" id="MF_01665">
    <property type="entry name" value="HemeA_synth_type2"/>
    <property type="match status" value="1"/>
</dbReference>
<dbReference type="InterPro" id="IPR003780">
    <property type="entry name" value="COX15/CtaA_fam"/>
</dbReference>
<dbReference type="InterPro" id="IPR023754">
    <property type="entry name" value="HemeA_Synthase_type2"/>
</dbReference>
<dbReference type="PANTHER" id="PTHR23289">
    <property type="entry name" value="CYTOCHROME C OXIDASE ASSEMBLY PROTEIN COX15"/>
    <property type="match status" value="1"/>
</dbReference>
<dbReference type="PANTHER" id="PTHR23289:SF2">
    <property type="entry name" value="CYTOCHROME C OXIDASE ASSEMBLY PROTEIN COX15 HOMOLOG"/>
    <property type="match status" value="1"/>
</dbReference>
<dbReference type="Pfam" id="PF02628">
    <property type="entry name" value="COX15-CtaA"/>
    <property type="match status" value="1"/>
</dbReference>
<sequence length="374" mass="40440">MTSLSLSPAAGPQRSAAAPKAVAVWLLVCAGMVFAMAIIGAITRLTESGLSITEWKPVTGALPPLSEAQWLAEFEKYRQIPEYQLLKRGMSLEEFKGIYFWEWLHRLWGRLIGVVFLLPFVWFWVRGQVSRALAPTLAGLFLLGGLQGFIGWFMVQSGLTERTDVSHYRLALHLGMAFLIYAALLKVALGLLDPAPAPQPAAGRLRPHAWAALALLGVTIVWGAFVAGINAGFAYNTWPLMGGTLAPAEMWTQTPVWLNLLENTAAVQFVHRWLAVVTALVVLSLCWQAWRTGGGTRLRGVAAGLAAATVAQVGLGIATLLSVVWIPLATAHQGGALVLTGLLVWTLHLLRPPETPRQATPLTATPLTEMPAPR</sequence>
<feature type="chain" id="PRO_1000187257" description="Heme A synthase">
    <location>
        <begin position="1"/>
        <end position="374"/>
    </location>
</feature>
<feature type="transmembrane region" description="Helical" evidence="1">
    <location>
        <begin position="22"/>
        <end position="42"/>
    </location>
</feature>
<feature type="transmembrane region" description="Helical" evidence="1">
    <location>
        <begin position="107"/>
        <end position="127"/>
    </location>
</feature>
<feature type="transmembrane region" description="Helical" evidence="1">
    <location>
        <begin position="135"/>
        <end position="155"/>
    </location>
</feature>
<feature type="transmembrane region" description="Helical" evidence="1">
    <location>
        <begin position="172"/>
        <end position="192"/>
    </location>
</feature>
<feature type="transmembrane region" description="Helical" evidence="1">
    <location>
        <begin position="209"/>
        <end position="229"/>
    </location>
</feature>
<feature type="transmembrane region" description="Helical" evidence="1">
    <location>
        <begin position="265"/>
        <end position="285"/>
    </location>
</feature>
<feature type="transmembrane region" description="Helical" evidence="1">
    <location>
        <begin position="306"/>
        <end position="326"/>
    </location>
</feature>
<feature type="transmembrane region" description="Helical" evidence="1">
    <location>
        <begin position="327"/>
        <end position="347"/>
    </location>
</feature>
<feature type="binding site" description="axial binding residue" evidence="1">
    <location>
        <position position="271"/>
    </location>
    <ligand>
        <name>heme</name>
        <dbReference type="ChEBI" id="CHEBI:30413"/>
    </ligand>
    <ligandPart>
        <name>Fe</name>
        <dbReference type="ChEBI" id="CHEBI:18248"/>
    </ligandPart>
</feature>
<feature type="binding site" description="axial binding residue" evidence="1">
    <location>
        <position position="332"/>
    </location>
    <ligand>
        <name>heme</name>
        <dbReference type="ChEBI" id="CHEBI:30413"/>
    </ligand>
    <ligandPart>
        <name>Fe</name>
        <dbReference type="ChEBI" id="CHEBI:18248"/>
    </ligandPart>
</feature>
<protein>
    <recommendedName>
        <fullName evidence="1">Heme A synthase</fullName>
        <shortName evidence="1">HAS</shortName>
        <ecNumber evidence="1">1.17.99.9</ecNumber>
    </recommendedName>
    <alternativeName>
        <fullName evidence="1">Cytochrome aa3-controlling protein</fullName>
    </alternativeName>
</protein>
<proteinExistence type="inferred from homology"/>
<reference key="1">
    <citation type="submission" date="2007-03" db="EMBL/GenBank/DDBJ databases">
        <title>Genome sequence of Rhodospirillum centenum.</title>
        <authorList>
            <person name="Touchman J.W."/>
            <person name="Bauer C."/>
            <person name="Blankenship R.E."/>
        </authorList>
    </citation>
    <scope>NUCLEOTIDE SEQUENCE [LARGE SCALE GENOMIC DNA]</scope>
    <source>
        <strain>ATCC 51521 / SW</strain>
    </source>
</reference>
<keyword id="KW-1003">Cell membrane</keyword>
<keyword id="KW-0350">Heme biosynthesis</keyword>
<keyword id="KW-0408">Iron</keyword>
<keyword id="KW-0472">Membrane</keyword>
<keyword id="KW-0479">Metal-binding</keyword>
<keyword id="KW-0560">Oxidoreductase</keyword>
<keyword id="KW-1185">Reference proteome</keyword>
<keyword id="KW-0812">Transmembrane</keyword>
<keyword id="KW-1133">Transmembrane helix</keyword>
<gene>
    <name evidence="1" type="primary">ctaA</name>
    <name type="ordered locus">RC1_2704</name>
</gene>
<organism>
    <name type="scientific">Rhodospirillum centenum (strain ATCC 51521 / SW)</name>
    <dbReference type="NCBI Taxonomy" id="414684"/>
    <lineage>
        <taxon>Bacteria</taxon>
        <taxon>Pseudomonadati</taxon>
        <taxon>Pseudomonadota</taxon>
        <taxon>Alphaproteobacteria</taxon>
        <taxon>Rhodospirillales</taxon>
        <taxon>Rhodospirillaceae</taxon>
        <taxon>Rhodospirillum</taxon>
    </lineage>
</organism>
<name>CTAA_RHOCS</name>
<accession>B6IUZ7</accession>